<accession>A5D510</accession>
<organism>
    <name type="scientific">Pelotomaculum thermopropionicum (strain DSM 13744 / JCM 10971 / SI)</name>
    <dbReference type="NCBI Taxonomy" id="370438"/>
    <lineage>
        <taxon>Bacteria</taxon>
        <taxon>Bacillati</taxon>
        <taxon>Bacillota</taxon>
        <taxon>Clostridia</taxon>
        <taxon>Eubacteriales</taxon>
        <taxon>Desulfotomaculaceae</taxon>
        <taxon>Pelotomaculum</taxon>
    </lineage>
</organism>
<dbReference type="EC" id="6.3.4.5" evidence="1"/>
<dbReference type="EMBL" id="AP009389">
    <property type="protein sequence ID" value="BAF58688.1"/>
    <property type="molecule type" value="Genomic_DNA"/>
</dbReference>
<dbReference type="SMR" id="A5D510"/>
<dbReference type="STRING" id="370438.PTH_0507"/>
<dbReference type="KEGG" id="pth:PTH_0507"/>
<dbReference type="eggNOG" id="COG0137">
    <property type="taxonomic scope" value="Bacteria"/>
</dbReference>
<dbReference type="HOGENOM" id="CLU_032784_4_2_9"/>
<dbReference type="UniPathway" id="UPA00068">
    <property type="reaction ID" value="UER00113"/>
</dbReference>
<dbReference type="Proteomes" id="UP000006556">
    <property type="component" value="Chromosome"/>
</dbReference>
<dbReference type="GO" id="GO:0005737">
    <property type="term" value="C:cytoplasm"/>
    <property type="evidence" value="ECO:0007669"/>
    <property type="project" value="UniProtKB-SubCell"/>
</dbReference>
<dbReference type="GO" id="GO:0004055">
    <property type="term" value="F:argininosuccinate synthase activity"/>
    <property type="evidence" value="ECO:0007669"/>
    <property type="project" value="UniProtKB-UniRule"/>
</dbReference>
<dbReference type="GO" id="GO:0005524">
    <property type="term" value="F:ATP binding"/>
    <property type="evidence" value="ECO:0007669"/>
    <property type="project" value="UniProtKB-UniRule"/>
</dbReference>
<dbReference type="GO" id="GO:0000053">
    <property type="term" value="P:argininosuccinate metabolic process"/>
    <property type="evidence" value="ECO:0007669"/>
    <property type="project" value="TreeGrafter"/>
</dbReference>
<dbReference type="GO" id="GO:0006526">
    <property type="term" value="P:L-arginine biosynthetic process"/>
    <property type="evidence" value="ECO:0007669"/>
    <property type="project" value="UniProtKB-UniRule"/>
</dbReference>
<dbReference type="GO" id="GO:0000050">
    <property type="term" value="P:urea cycle"/>
    <property type="evidence" value="ECO:0007669"/>
    <property type="project" value="TreeGrafter"/>
</dbReference>
<dbReference type="CDD" id="cd01999">
    <property type="entry name" value="ASS"/>
    <property type="match status" value="1"/>
</dbReference>
<dbReference type="FunFam" id="3.40.50.620:FF:000019">
    <property type="entry name" value="Argininosuccinate synthase"/>
    <property type="match status" value="1"/>
</dbReference>
<dbReference type="FunFam" id="3.90.1260.10:FF:000007">
    <property type="entry name" value="Argininosuccinate synthase"/>
    <property type="match status" value="1"/>
</dbReference>
<dbReference type="Gene3D" id="3.90.1260.10">
    <property type="entry name" value="Argininosuccinate synthetase, chain A, domain 2"/>
    <property type="match status" value="1"/>
</dbReference>
<dbReference type="Gene3D" id="3.40.50.620">
    <property type="entry name" value="HUPs"/>
    <property type="match status" value="1"/>
</dbReference>
<dbReference type="Gene3D" id="1.20.5.470">
    <property type="entry name" value="Single helix bin"/>
    <property type="match status" value="1"/>
</dbReference>
<dbReference type="HAMAP" id="MF_00005">
    <property type="entry name" value="Arg_succ_synth_type1"/>
    <property type="match status" value="1"/>
</dbReference>
<dbReference type="InterPro" id="IPR048268">
    <property type="entry name" value="Arginosuc_syn_C"/>
</dbReference>
<dbReference type="InterPro" id="IPR048267">
    <property type="entry name" value="Arginosuc_syn_N"/>
</dbReference>
<dbReference type="InterPro" id="IPR001518">
    <property type="entry name" value="Arginosuc_synth"/>
</dbReference>
<dbReference type="InterPro" id="IPR018223">
    <property type="entry name" value="Arginosuc_synth_CS"/>
</dbReference>
<dbReference type="InterPro" id="IPR023434">
    <property type="entry name" value="Arginosuc_synth_type_1_subfam"/>
</dbReference>
<dbReference type="InterPro" id="IPR024074">
    <property type="entry name" value="AS_cat/multimer_dom_body"/>
</dbReference>
<dbReference type="InterPro" id="IPR014729">
    <property type="entry name" value="Rossmann-like_a/b/a_fold"/>
</dbReference>
<dbReference type="NCBIfam" id="TIGR00032">
    <property type="entry name" value="argG"/>
    <property type="match status" value="1"/>
</dbReference>
<dbReference type="NCBIfam" id="NF001770">
    <property type="entry name" value="PRK00509.1"/>
    <property type="match status" value="1"/>
</dbReference>
<dbReference type="PANTHER" id="PTHR11587">
    <property type="entry name" value="ARGININOSUCCINATE SYNTHASE"/>
    <property type="match status" value="1"/>
</dbReference>
<dbReference type="PANTHER" id="PTHR11587:SF2">
    <property type="entry name" value="ARGININOSUCCINATE SYNTHASE"/>
    <property type="match status" value="1"/>
</dbReference>
<dbReference type="Pfam" id="PF20979">
    <property type="entry name" value="Arginosuc_syn_C"/>
    <property type="match status" value="1"/>
</dbReference>
<dbReference type="Pfam" id="PF00764">
    <property type="entry name" value="Arginosuc_synth"/>
    <property type="match status" value="1"/>
</dbReference>
<dbReference type="SUPFAM" id="SSF52402">
    <property type="entry name" value="Adenine nucleotide alpha hydrolases-like"/>
    <property type="match status" value="1"/>
</dbReference>
<dbReference type="SUPFAM" id="SSF69864">
    <property type="entry name" value="Argininosuccinate synthetase, C-terminal domain"/>
    <property type="match status" value="1"/>
</dbReference>
<dbReference type="PROSITE" id="PS00564">
    <property type="entry name" value="ARGININOSUCCIN_SYN_1"/>
    <property type="match status" value="1"/>
</dbReference>
<dbReference type="PROSITE" id="PS00565">
    <property type="entry name" value="ARGININOSUCCIN_SYN_2"/>
    <property type="match status" value="1"/>
</dbReference>
<keyword id="KW-0028">Amino-acid biosynthesis</keyword>
<keyword id="KW-0055">Arginine biosynthesis</keyword>
<keyword id="KW-0067">ATP-binding</keyword>
<keyword id="KW-0963">Cytoplasm</keyword>
<keyword id="KW-0436">Ligase</keyword>
<keyword id="KW-0547">Nucleotide-binding</keyword>
<keyword id="KW-1185">Reference proteome</keyword>
<comment type="catalytic activity">
    <reaction evidence="1">
        <text>L-citrulline + L-aspartate + ATP = 2-(N(omega)-L-arginino)succinate + AMP + diphosphate + H(+)</text>
        <dbReference type="Rhea" id="RHEA:10932"/>
        <dbReference type="ChEBI" id="CHEBI:15378"/>
        <dbReference type="ChEBI" id="CHEBI:29991"/>
        <dbReference type="ChEBI" id="CHEBI:30616"/>
        <dbReference type="ChEBI" id="CHEBI:33019"/>
        <dbReference type="ChEBI" id="CHEBI:57472"/>
        <dbReference type="ChEBI" id="CHEBI:57743"/>
        <dbReference type="ChEBI" id="CHEBI:456215"/>
        <dbReference type="EC" id="6.3.4.5"/>
    </reaction>
</comment>
<comment type="pathway">
    <text evidence="1">Amino-acid biosynthesis; L-arginine biosynthesis; L-arginine from L-ornithine and carbamoyl phosphate: step 2/3.</text>
</comment>
<comment type="subunit">
    <text evidence="1">Homotetramer.</text>
</comment>
<comment type="subcellular location">
    <subcellularLocation>
        <location evidence="1">Cytoplasm</location>
    </subcellularLocation>
</comment>
<comment type="similarity">
    <text evidence="1">Belongs to the argininosuccinate synthase family. Type 1 subfamily.</text>
</comment>
<evidence type="ECO:0000255" key="1">
    <source>
        <dbReference type="HAMAP-Rule" id="MF_00005"/>
    </source>
</evidence>
<gene>
    <name evidence="1" type="primary">argG</name>
    <name type="ordered locus">PTH_0507</name>
</gene>
<reference key="1">
    <citation type="journal article" date="2008" name="Genome Res.">
        <title>The genome of Pelotomaculum thermopropionicum reveals niche-associated evolution in anaerobic microbiota.</title>
        <authorList>
            <person name="Kosaka T."/>
            <person name="Kato S."/>
            <person name="Shimoyama T."/>
            <person name="Ishii S."/>
            <person name="Abe T."/>
            <person name="Watanabe K."/>
        </authorList>
    </citation>
    <scope>NUCLEOTIDE SEQUENCE [LARGE SCALE GENOMIC DNA]</scope>
    <source>
        <strain>DSM 13744 / JCM 10971 / SI</strain>
    </source>
</reference>
<sequence length="401" mass="44450">MAKVVLAYSGGLDTSVAIPWLKENYGYEVIAMSADLGQGEELAPLREKAIKSGASKIYIEDVRREFVEDYIFPTLKAGAVYEGKYLLGTSMARPLIAKKLVEIARKEGAEAVAHGATGKGNDQVRFELAVKALAPDLKIIAPWREWDIRSREDAVDYASARGIPVPVTRERPYSLDRNLWHLSHEGADLEDPGNEPPSDVLLLITPPEKAPDKPAYVKIEFERGVPVKLDGEALDPVTLIERLNKIAGENGVGIADMVENRLVGMKSRGVYETPGGTVLFLAHRELELLTLDRATLHFKEIVASRYAELVYDGMWFVPLREALDAFVDVTQRTVTGTVVMKLYKGNCTPAGVKSPYSLYDQELSTFGRDEIYNQRDAEGFINLFGLPLKVRALMEKKAGLR</sequence>
<feature type="chain" id="PRO_1000073823" description="Argininosuccinate synthase">
    <location>
        <begin position="1"/>
        <end position="401"/>
    </location>
</feature>
<feature type="binding site" evidence="1">
    <location>
        <begin position="7"/>
        <end position="15"/>
    </location>
    <ligand>
        <name>ATP</name>
        <dbReference type="ChEBI" id="CHEBI:30616"/>
    </ligand>
</feature>
<feature type="binding site" evidence="1">
    <location>
        <position position="34"/>
    </location>
    <ligand>
        <name>ATP</name>
        <dbReference type="ChEBI" id="CHEBI:30616"/>
    </ligand>
</feature>
<feature type="binding site" evidence="1">
    <location>
        <position position="85"/>
    </location>
    <ligand>
        <name>L-citrulline</name>
        <dbReference type="ChEBI" id="CHEBI:57743"/>
    </ligand>
</feature>
<feature type="binding site" evidence="1">
    <location>
        <position position="90"/>
    </location>
    <ligand>
        <name>L-citrulline</name>
        <dbReference type="ChEBI" id="CHEBI:57743"/>
    </ligand>
</feature>
<feature type="binding site" evidence="1">
    <location>
        <position position="115"/>
    </location>
    <ligand>
        <name>ATP</name>
        <dbReference type="ChEBI" id="CHEBI:30616"/>
    </ligand>
</feature>
<feature type="binding site" evidence="1">
    <location>
        <position position="117"/>
    </location>
    <ligand>
        <name>L-aspartate</name>
        <dbReference type="ChEBI" id="CHEBI:29991"/>
    </ligand>
</feature>
<feature type="binding site" evidence="1">
    <location>
        <position position="121"/>
    </location>
    <ligand>
        <name>L-aspartate</name>
        <dbReference type="ChEBI" id="CHEBI:29991"/>
    </ligand>
</feature>
<feature type="binding site" evidence="1">
    <location>
        <position position="121"/>
    </location>
    <ligand>
        <name>L-citrulline</name>
        <dbReference type="ChEBI" id="CHEBI:57743"/>
    </ligand>
</feature>
<feature type="binding site" evidence="1">
    <location>
        <position position="122"/>
    </location>
    <ligand>
        <name>L-aspartate</name>
        <dbReference type="ChEBI" id="CHEBI:29991"/>
    </ligand>
</feature>
<feature type="binding site" evidence="1">
    <location>
        <position position="125"/>
    </location>
    <ligand>
        <name>L-citrulline</name>
        <dbReference type="ChEBI" id="CHEBI:57743"/>
    </ligand>
</feature>
<feature type="binding site" evidence="1">
    <location>
        <position position="174"/>
    </location>
    <ligand>
        <name>L-citrulline</name>
        <dbReference type="ChEBI" id="CHEBI:57743"/>
    </ligand>
</feature>
<feature type="binding site" evidence="1">
    <location>
        <position position="183"/>
    </location>
    <ligand>
        <name>L-citrulline</name>
        <dbReference type="ChEBI" id="CHEBI:57743"/>
    </ligand>
</feature>
<feature type="binding site" evidence="1">
    <location>
        <position position="259"/>
    </location>
    <ligand>
        <name>L-citrulline</name>
        <dbReference type="ChEBI" id="CHEBI:57743"/>
    </ligand>
</feature>
<feature type="binding site" evidence="1">
    <location>
        <position position="271"/>
    </location>
    <ligand>
        <name>L-citrulline</name>
        <dbReference type="ChEBI" id="CHEBI:57743"/>
    </ligand>
</feature>
<protein>
    <recommendedName>
        <fullName evidence="1">Argininosuccinate synthase</fullName>
        <ecNumber evidence="1">6.3.4.5</ecNumber>
    </recommendedName>
    <alternativeName>
        <fullName evidence="1">Citrulline--aspartate ligase</fullName>
    </alternativeName>
</protein>
<proteinExistence type="inferred from homology"/>
<name>ASSY_PELTS</name>